<keyword id="KW-0030">Aminoacyl-tRNA synthetase</keyword>
<keyword id="KW-0067">ATP-binding</keyword>
<keyword id="KW-0963">Cytoplasm</keyword>
<keyword id="KW-0436">Ligase</keyword>
<keyword id="KW-0547">Nucleotide-binding</keyword>
<keyword id="KW-0648">Protein biosynthesis</keyword>
<keyword id="KW-1185">Reference proteome</keyword>
<gene>
    <name evidence="1" type="primary">serS</name>
    <name type="ordered locus">Jann_1070</name>
</gene>
<comment type="function">
    <text evidence="1">Catalyzes the attachment of serine to tRNA(Ser). Is also able to aminoacylate tRNA(Sec) with serine, to form the misacylated tRNA L-seryl-tRNA(Sec), which will be further converted into selenocysteinyl-tRNA(Sec).</text>
</comment>
<comment type="catalytic activity">
    <reaction evidence="1">
        <text>tRNA(Ser) + L-serine + ATP = L-seryl-tRNA(Ser) + AMP + diphosphate + H(+)</text>
        <dbReference type="Rhea" id="RHEA:12292"/>
        <dbReference type="Rhea" id="RHEA-COMP:9669"/>
        <dbReference type="Rhea" id="RHEA-COMP:9703"/>
        <dbReference type="ChEBI" id="CHEBI:15378"/>
        <dbReference type="ChEBI" id="CHEBI:30616"/>
        <dbReference type="ChEBI" id="CHEBI:33019"/>
        <dbReference type="ChEBI" id="CHEBI:33384"/>
        <dbReference type="ChEBI" id="CHEBI:78442"/>
        <dbReference type="ChEBI" id="CHEBI:78533"/>
        <dbReference type="ChEBI" id="CHEBI:456215"/>
        <dbReference type="EC" id="6.1.1.11"/>
    </reaction>
</comment>
<comment type="catalytic activity">
    <reaction evidence="1">
        <text>tRNA(Sec) + L-serine + ATP = L-seryl-tRNA(Sec) + AMP + diphosphate + H(+)</text>
        <dbReference type="Rhea" id="RHEA:42580"/>
        <dbReference type="Rhea" id="RHEA-COMP:9742"/>
        <dbReference type="Rhea" id="RHEA-COMP:10128"/>
        <dbReference type="ChEBI" id="CHEBI:15378"/>
        <dbReference type="ChEBI" id="CHEBI:30616"/>
        <dbReference type="ChEBI" id="CHEBI:33019"/>
        <dbReference type="ChEBI" id="CHEBI:33384"/>
        <dbReference type="ChEBI" id="CHEBI:78442"/>
        <dbReference type="ChEBI" id="CHEBI:78533"/>
        <dbReference type="ChEBI" id="CHEBI:456215"/>
        <dbReference type="EC" id="6.1.1.11"/>
    </reaction>
</comment>
<comment type="pathway">
    <text evidence="1">Aminoacyl-tRNA biosynthesis; selenocysteinyl-tRNA(Sec) biosynthesis; L-seryl-tRNA(Sec) from L-serine and tRNA(Sec): step 1/1.</text>
</comment>
<comment type="subunit">
    <text evidence="1">Homodimer. The tRNA molecule binds across the dimer.</text>
</comment>
<comment type="subcellular location">
    <subcellularLocation>
        <location evidence="1">Cytoplasm</location>
    </subcellularLocation>
</comment>
<comment type="domain">
    <text evidence="1">Consists of two distinct domains, a catalytic core and a N-terminal extension that is involved in tRNA binding.</text>
</comment>
<comment type="similarity">
    <text evidence="1">Belongs to the class-II aminoacyl-tRNA synthetase family. Type-1 seryl-tRNA synthetase subfamily.</text>
</comment>
<name>SYS_JANSC</name>
<feature type="chain" id="PRO_1000019704" description="Serine--tRNA ligase">
    <location>
        <begin position="1"/>
        <end position="430"/>
    </location>
</feature>
<feature type="binding site" evidence="1">
    <location>
        <begin position="231"/>
        <end position="233"/>
    </location>
    <ligand>
        <name>L-serine</name>
        <dbReference type="ChEBI" id="CHEBI:33384"/>
    </ligand>
</feature>
<feature type="binding site" evidence="1">
    <location>
        <begin position="262"/>
        <end position="264"/>
    </location>
    <ligand>
        <name>ATP</name>
        <dbReference type="ChEBI" id="CHEBI:30616"/>
    </ligand>
</feature>
<feature type="binding site" evidence="1">
    <location>
        <position position="285"/>
    </location>
    <ligand>
        <name>L-serine</name>
        <dbReference type="ChEBI" id="CHEBI:33384"/>
    </ligand>
</feature>
<feature type="binding site" evidence="1">
    <location>
        <begin position="349"/>
        <end position="352"/>
    </location>
    <ligand>
        <name>ATP</name>
        <dbReference type="ChEBI" id="CHEBI:30616"/>
    </ligand>
</feature>
<feature type="binding site" evidence="1">
    <location>
        <position position="385"/>
    </location>
    <ligand>
        <name>L-serine</name>
        <dbReference type="ChEBI" id="CHEBI:33384"/>
    </ligand>
</feature>
<reference key="1">
    <citation type="submission" date="2006-02" db="EMBL/GenBank/DDBJ databases">
        <title>Complete sequence of chromosome of Jannaschia sp. CCS1.</title>
        <authorList>
            <consortium name="US DOE Joint Genome Institute"/>
            <person name="Copeland A."/>
            <person name="Lucas S."/>
            <person name="Lapidus A."/>
            <person name="Barry K."/>
            <person name="Detter J.C."/>
            <person name="Glavina del Rio T."/>
            <person name="Hammon N."/>
            <person name="Israni S."/>
            <person name="Pitluck S."/>
            <person name="Brettin T."/>
            <person name="Bruce D."/>
            <person name="Han C."/>
            <person name="Tapia R."/>
            <person name="Gilna P."/>
            <person name="Chertkov O."/>
            <person name="Saunders E."/>
            <person name="Schmutz J."/>
            <person name="Larimer F."/>
            <person name="Land M."/>
            <person name="Kyrpides N."/>
            <person name="Lykidis A."/>
            <person name="Moran M.A."/>
            <person name="Belas R."/>
            <person name="Ye W."/>
            <person name="Buchan A."/>
            <person name="Gonzalez J.M."/>
            <person name="Schell M.A."/>
            <person name="Richardson P."/>
        </authorList>
    </citation>
    <scope>NUCLEOTIDE SEQUENCE [LARGE SCALE GENOMIC DNA]</scope>
    <source>
        <strain>CCS1</strain>
    </source>
</reference>
<accession>Q28TH5</accession>
<dbReference type="EC" id="6.1.1.11" evidence="1"/>
<dbReference type="EMBL" id="CP000264">
    <property type="protein sequence ID" value="ABD53987.1"/>
    <property type="molecule type" value="Genomic_DNA"/>
</dbReference>
<dbReference type="RefSeq" id="WP_011454194.1">
    <property type="nucleotide sequence ID" value="NC_007802.1"/>
</dbReference>
<dbReference type="SMR" id="Q28TH5"/>
<dbReference type="STRING" id="290400.Jann_1070"/>
<dbReference type="KEGG" id="jan:Jann_1070"/>
<dbReference type="eggNOG" id="COG0172">
    <property type="taxonomic scope" value="Bacteria"/>
</dbReference>
<dbReference type="HOGENOM" id="CLU_023797_1_1_5"/>
<dbReference type="OrthoDB" id="9804647at2"/>
<dbReference type="UniPathway" id="UPA00906">
    <property type="reaction ID" value="UER00895"/>
</dbReference>
<dbReference type="Proteomes" id="UP000008326">
    <property type="component" value="Chromosome"/>
</dbReference>
<dbReference type="GO" id="GO:0005737">
    <property type="term" value="C:cytoplasm"/>
    <property type="evidence" value="ECO:0007669"/>
    <property type="project" value="UniProtKB-SubCell"/>
</dbReference>
<dbReference type="GO" id="GO:0005524">
    <property type="term" value="F:ATP binding"/>
    <property type="evidence" value="ECO:0007669"/>
    <property type="project" value="UniProtKB-UniRule"/>
</dbReference>
<dbReference type="GO" id="GO:0004828">
    <property type="term" value="F:serine-tRNA ligase activity"/>
    <property type="evidence" value="ECO:0007669"/>
    <property type="project" value="UniProtKB-UniRule"/>
</dbReference>
<dbReference type="GO" id="GO:0016260">
    <property type="term" value="P:selenocysteine biosynthetic process"/>
    <property type="evidence" value="ECO:0007669"/>
    <property type="project" value="UniProtKB-UniRule"/>
</dbReference>
<dbReference type="GO" id="GO:0006434">
    <property type="term" value="P:seryl-tRNA aminoacylation"/>
    <property type="evidence" value="ECO:0007669"/>
    <property type="project" value="UniProtKB-UniRule"/>
</dbReference>
<dbReference type="CDD" id="cd00770">
    <property type="entry name" value="SerRS_core"/>
    <property type="match status" value="1"/>
</dbReference>
<dbReference type="Gene3D" id="3.30.930.10">
    <property type="entry name" value="Bira Bifunctional Protein, Domain 2"/>
    <property type="match status" value="1"/>
</dbReference>
<dbReference type="Gene3D" id="1.10.287.40">
    <property type="entry name" value="Serine-tRNA synthetase, tRNA binding domain"/>
    <property type="match status" value="1"/>
</dbReference>
<dbReference type="HAMAP" id="MF_00176">
    <property type="entry name" value="Ser_tRNA_synth_type1"/>
    <property type="match status" value="1"/>
</dbReference>
<dbReference type="InterPro" id="IPR002314">
    <property type="entry name" value="aa-tRNA-synt_IIb"/>
</dbReference>
<dbReference type="InterPro" id="IPR006195">
    <property type="entry name" value="aa-tRNA-synth_II"/>
</dbReference>
<dbReference type="InterPro" id="IPR045864">
    <property type="entry name" value="aa-tRNA-synth_II/BPL/LPL"/>
</dbReference>
<dbReference type="InterPro" id="IPR002317">
    <property type="entry name" value="Ser-tRNA-ligase_type_1"/>
</dbReference>
<dbReference type="InterPro" id="IPR015866">
    <property type="entry name" value="Ser-tRNA-synth_1_N"/>
</dbReference>
<dbReference type="InterPro" id="IPR042103">
    <property type="entry name" value="SerRS_1_N_sf"/>
</dbReference>
<dbReference type="InterPro" id="IPR033729">
    <property type="entry name" value="SerRS_core"/>
</dbReference>
<dbReference type="InterPro" id="IPR010978">
    <property type="entry name" value="tRNA-bd_arm"/>
</dbReference>
<dbReference type="NCBIfam" id="TIGR00414">
    <property type="entry name" value="serS"/>
    <property type="match status" value="1"/>
</dbReference>
<dbReference type="PANTHER" id="PTHR43697:SF1">
    <property type="entry name" value="SERINE--TRNA LIGASE"/>
    <property type="match status" value="1"/>
</dbReference>
<dbReference type="PANTHER" id="PTHR43697">
    <property type="entry name" value="SERYL-TRNA SYNTHETASE"/>
    <property type="match status" value="1"/>
</dbReference>
<dbReference type="Pfam" id="PF02403">
    <property type="entry name" value="Seryl_tRNA_N"/>
    <property type="match status" value="1"/>
</dbReference>
<dbReference type="Pfam" id="PF00587">
    <property type="entry name" value="tRNA-synt_2b"/>
    <property type="match status" value="1"/>
</dbReference>
<dbReference type="PIRSF" id="PIRSF001529">
    <property type="entry name" value="Ser-tRNA-synth_IIa"/>
    <property type="match status" value="1"/>
</dbReference>
<dbReference type="PRINTS" id="PR00981">
    <property type="entry name" value="TRNASYNTHSER"/>
</dbReference>
<dbReference type="SUPFAM" id="SSF55681">
    <property type="entry name" value="Class II aaRS and biotin synthetases"/>
    <property type="match status" value="1"/>
</dbReference>
<dbReference type="SUPFAM" id="SSF46589">
    <property type="entry name" value="tRNA-binding arm"/>
    <property type="match status" value="1"/>
</dbReference>
<dbReference type="PROSITE" id="PS50862">
    <property type="entry name" value="AA_TRNA_LIGASE_II"/>
    <property type="match status" value="1"/>
</dbReference>
<sequence>MHDIRAIRETPAAFDAALALRGLSAASADILAIDEARRAAITQAETAQADRNAASKEVGKAKASGDEAEFERLRALVSTKKDEIARLDEEAKAKDAELTAILEALPNLPSPDVPAGADEDDNVEQHRRGTPRAFDFKPLEHFDIPGIAASMDFETAAKLSGARFVTLKGAVARVHRALAQFMLDTHTEENGLTEINAPVLVRDETMYGTGQLPKFAEDSYQTTNGWWLIPTSEVTLTSLDSGNIVDEATLPHRYAAHSLCFRSEAGSAGRDTAGMLRQHQFEKVEMVSVTHPDQSNAEQQRMLACAEGILDKLEIPYRTVLLCAGDMGFGATRTYDIEAWLPGQDTYREISSVSTCGAFQARRMNARFKPSDGGKPEFVHTLNGSGLAVGRCLIAVLENGQNADGSVTLPAALHPWLGGKTRITAEGNLA</sequence>
<organism>
    <name type="scientific">Jannaschia sp. (strain CCS1)</name>
    <dbReference type="NCBI Taxonomy" id="290400"/>
    <lineage>
        <taxon>Bacteria</taxon>
        <taxon>Pseudomonadati</taxon>
        <taxon>Pseudomonadota</taxon>
        <taxon>Alphaproteobacteria</taxon>
        <taxon>Rhodobacterales</taxon>
        <taxon>Roseobacteraceae</taxon>
        <taxon>Jannaschia</taxon>
    </lineage>
</organism>
<proteinExistence type="inferred from homology"/>
<protein>
    <recommendedName>
        <fullName evidence="1">Serine--tRNA ligase</fullName>
        <ecNumber evidence="1">6.1.1.11</ecNumber>
    </recommendedName>
    <alternativeName>
        <fullName evidence="1">Seryl-tRNA synthetase</fullName>
        <shortName evidence="1">SerRS</shortName>
    </alternativeName>
    <alternativeName>
        <fullName evidence="1">Seryl-tRNA(Ser/Sec) synthetase</fullName>
    </alternativeName>
</protein>
<evidence type="ECO:0000255" key="1">
    <source>
        <dbReference type="HAMAP-Rule" id="MF_00176"/>
    </source>
</evidence>